<feature type="chain" id="PRO_0000212007" description="Arginine kinase">
    <location>
        <begin position="1"/>
        <end position="715"/>
    </location>
</feature>
<feature type="repeat" description="Approximate">
    <location>
        <begin position="1"/>
        <end position="366"/>
    </location>
</feature>
<feature type="domain" description="Phosphagen kinase N-terminal 1" evidence="2">
    <location>
        <begin position="11"/>
        <end position="95"/>
    </location>
</feature>
<feature type="domain" description="Phosphagen kinase C-terminal 1" evidence="3">
    <location>
        <begin position="123"/>
        <end position="362"/>
    </location>
</feature>
<feature type="domain" description="Phosphagen kinase N-terminal 2" evidence="2">
    <location>
        <begin position="365"/>
        <end position="447"/>
    </location>
</feature>
<feature type="repeat" description="Approximate">
    <location>
        <begin position="367"/>
        <end position="715"/>
    </location>
</feature>
<feature type="domain" description="Phosphagen kinase C-terminal 2" evidence="3">
    <location>
        <begin position="475"/>
        <end position="714"/>
    </location>
</feature>
<feature type="binding site" evidence="1">
    <location>
        <begin position="68"/>
        <end position="72"/>
    </location>
    <ligand>
        <name>substrate</name>
    </ligand>
</feature>
<feature type="binding site" evidence="3">
    <location>
        <begin position="126"/>
        <end position="130"/>
    </location>
    <ligand>
        <name>ATP</name>
        <dbReference type="ChEBI" id="CHEBI:30616"/>
    </ligand>
</feature>
<feature type="binding site" evidence="3">
    <location>
        <position position="189"/>
    </location>
    <ligand>
        <name>ATP</name>
        <dbReference type="ChEBI" id="CHEBI:30616"/>
    </ligand>
</feature>
<feature type="binding site" evidence="1">
    <location>
        <position position="229"/>
    </location>
    <ligand>
        <name>substrate</name>
    </ligand>
</feature>
<feature type="binding site" evidence="3">
    <location>
        <position position="233"/>
    </location>
    <ligand>
        <name>ATP</name>
        <dbReference type="ChEBI" id="CHEBI:30616"/>
    </ligand>
</feature>
<feature type="binding site" evidence="1">
    <location>
        <position position="275"/>
    </location>
    <ligand>
        <name>substrate</name>
    </ligand>
</feature>
<feature type="binding site" evidence="3">
    <location>
        <begin position="284"/>
        <end position="288"/>
    </location>
    <ligand>
        <name>ATP</name>
        <dbReference type="ChEBI" id="CHEBI:30616"/>
    </ligand>
</feature>
<feature type="binding site" evidence="3">
    <location>
        <begin position="312"/>
        <end position="317"/>
    </location>
    <ligand>
        <name>ATP</name>
        <dbReference type="ChEBI" id="CHEBI:30616"/>
    </ligand>
</feature>
<feature type="binding site" evidence="1">
    <location>
        <position position="317"/>
    </location>
    <ligand>
        <name>substrate</name>
    </ligand>
</feature>
<feature type="helix" evidence="4">
    <location>
        <begin position="4"/>
        <end position="11"/>
    </location>
</feature>
<feature type="turn" evidence="4">
    <location>
        <begin position="12"/>
        <end position="14"/>
    </location>
</feature>
<feature type="helix" evidence="4">
    <location>
        <begin position="18"/>
        <end position="21"/>
    </location>
</feature>
<feature type="helix" evidence="4">
    <location>
        <begin position="30"/>
        <end position="34"/>
    </location>
</feature>
<feature type="helix" evidence="4">
    <location>
        <begin position="37"/>
        <end position="43"/>
    </location>
</feature>
<feature type="helix" evidence="4">
    <location>
        <begin position="54"/>
        <end position="63"/>
    </location>
</feature>
<feature type="helix" evidence="4">
    <location>
        <begin position="76"/>
        <end position="81"/>
    </location>
</feature>
<feature type="helix" evidence="4">
    <location>
        <begin position="83"/>
        <end position="93"/>
    </location>
</feature>
<feature type="turn" evidence="4">
    <location>
        <begin position="94"/>
        <end position="96"/>
    </location>
</feature>
<feature type="turn" evidence="4">
    <location>
        <begin position="99"/>
        <end position="101"/>
    </location>
</feature>
<feature type="helix" evidence="4">
    <location>
        <begin position="109"/>
        <end position="111"/>
    </location>
</feature>
<feature type="strand" evidence="4">
    <location>
        <begin position="122"/>
        <end position="133"/>
    </location>
</feature>
<feature type="turn" evidence="4">
    <location>
        <begin position="141"/>
        <end position="143"/>
    </location>
</feature>
<feature type="helix" evidence="4">
    <location>
        <begin position="146"/>
        <end position="160"/>
    </location>
</feature>
<feature type="helix" evidence="4">
    <location>
        <begin position="165"/>
        <end position="167"/>
    </location>
</feature>
<feature type="strand" evidence="4">
    <location>
        <begin position="169"/>
        <end position="174"/>
    </location>
</feature>
<feature type="helix" evidence="4">
    <location>
        <begin position="179"/>
        <end position="187"/>
    </location>
</feature>
<feature type="helix" evidence="4">
    <location>
        <begin position="197"/>
        <end position="201"/>
    </location>
</feature>
<feature type="turn" evidence="4">
    <location>
        <begin position="202"/>
        <end position="211"/>
    </location>
</feature>
<feature type="strand" evidence="4">
    <location>
        <begin position="213"/>
        <end position="217"/>
    </location>
</feature>
<feature type="strand" evidence="4">
    <location>
        <begin position="222"/>
        <end position="241"/>
    </location>
</feature>
<feature type="helix" evidence="4">
    <location>
        <begin position="243"/>
        <end position="261"/>
    </location>
</feature>
<feature type="turn" evidence="4">
    <location>
        <begin position="267"/>
        <end position="269"/>
    </location>
</feature>
<feature type="helix" evidence="4">
    <location>
        <begin position="276"/>
        <end position="278"/>
    </location>
</feature>
<feature type="strand" evidence="4">
    <location>
        <begin position="283"/>
        <end position="290"/>
    </location>
</feature>
<feature type="helix" evidence="4">
    <location>
        <begin position="292"/>
        <end position="295"/>
    </location>
</feature>
<feature type="helix" evidence="4">
    <location>
        <begin position="300"/>
        <end position="307"/>
    </location>
</feature>
<feature type="strand" evidence="4">
    <location>
        <begin position="309"/>
        <end position="313"/>
    </location>
</feature>
<feature type="strand" evidence="4">
    <location>
        <begin position="315"/>
        <end position="318"/>
    </location>
</feature>
<feature type="strand" evidence="4">
    <location>
        <begin position="320"/>
        <end position="323"/>
    </location>
</feature>
<feature type="strand" evidence="4">
    <location>
        <begin position="328"/>
        <end position="333"/>
    </location>
</feature>
<feature type="strand" evidence="4">
    <location>
        <begin position="337"/>
        <end position="339"/>
    </location>
</feature>
<feature type="helix" evidence="4">
    <location>
        <begin position="341"/>
        <end position="367"/>
    </location>
</feature>
<feature type="helix" evidence="4">
    <location>
        <begin position="372"/>
        <end position="375"/>
    </location>
</feature>
<feature type="helix" evidence="4">
    <location>
        <begin position="382"/>
        <end position="386"/>
    </location>
</feature>
<feature type="helix" evidence="4">
    <location>
        <begin position="389"/>
        <end position="395"/>
    </location>
</feature>
<feature type="helix" evidence="4">
    <location>
        <begin position="406"/>
        <end position="415"/>
    </location>
</feature>
<feature type="helix" evidence="4">
    <location>
        <begin position="430"/>
        <end position="433"/>
    </location>
</feature>
<feature type="helix" evidence="4">
    <location>
        <begin position="435"/>
        <end position="445"/>
    </location>
</feature>
<feature type="turn" evidence="4">
    <location>
        <begin position="446"/>
        <end position="448"/>
    </location>
</feature>
<feature type="helix" evidence="4">
    <location>
        <begin position="451"/>
        <end position="453"/>
    </location>
</feature>
<feature type="helix" evidence="4">
    <location>
        <begin position="461"/>
        <end position="463"/>
    </location>
</feature>
<feature type="strand" evidence="4">
    <location>
        <begin position="474"/>
        <end position="485"/>
    </location>
</feature>
<feature type="helix" evidence="4">
    <location>
        <begin position="493"/>
        <end position="495"/>
    </location>
</feature>
<feature type="helix" evidence="4">
    <location>
        <begin position="498"/>
        <end position="513"/>
    </location>
</feature>
<feature type="helix" evidence="4">
    <location>
        <begin position="517"/>
        <end position="519"/>
    </location>
</feature>
<feature type="strand" evidence="4">
    <location>
        <begin position="521"/>
        <end position="526"/>
    </location>
</feature>
<feature type="helix" evidence="4">
    <location>
        <begin position="531"/>
        <end position="539"/>
    </location>
</feature>
<feature type="helix" evidence="4">
    <location>
        <begin position="549"/>
        <end position="554"/>
    </location>
</feature>
<feature type="turn" evidence="4">
    <location>
        <begin position="555"/>
        <end position="563"/>
    </location>
</feature>
<feature type="strand" evidence="4">
    <location>
        <begin position="565"/>
        <end position="569"/>
    </location>
</feature>
<feature type="strand" evidence="4">
    <location>
        <begin position="574"/>
        <end position="593"/>
    </location>
</feature>
<feature type="helix" evidence="4">
    <location>
        <begin position="595"/>
        <end position="613"/>
    </location>
</feature>
<feature type="turn" evidence="4">
    <location>
        <begin position="619"/>
        <end position="621"/>
    </location>
</feature>
<feature type="helix" evidence="4">
    <location>
        <begin position="628"/>
        <end position="630"/>
    </location>
</feature>
<feature type="strand" evidence="4">
    <location>
        <begin position="635"/>
        <end position="642"/>
    </location>
</feature>
<feature type="helix" evidence="4">
    <location>
        <begin position="644"/>
        <end position="648"/>
    </location>
</feature>
<feature type="helix" evidence="4">
    <location>
        <begin position="652"/>
        <end position="658"/>
    </location>
</feature>
<feature type="strand" evidence="4">
    <location>
        <begin position="661"/>
        <end position="665"/>
    </location>
</feature>
<feature type="strand" evidence="4">
    <location>
        <begin position="679"/>
        <end position="685"/>
    </location>
</feature>
<feature type="strand" evidence="4">
    <location>
        <begin position="689"/>
        <end position="691"/>
    </location>
</feature>
<feature type="helix" evidence="4">
    <location>
        <begin position="693"/>
        <end position="711"/>
    </location>
</feature>
<dbReference type="EC" id="2.7.3.3"/>
<dbReference type="EMBL" id="AB008014">
    <property type="protein sequence ID" value="BAA22888.1"/>
    <property type="molecule type" value="mRNA"/>
</dbReference>
<dbReference type="PDB" id="4RF6">
    <property type="method" value="X-ray"/>
    <property type="resolution" value="1.95 A"/>
    <property type="chains" value="A/B=1-715"/>
</dbReference>
<dbReference type="PDB" id="4RF7">
    <property type="method" value="X-ray"/>
    <property type="resolution" value="2.10 A"/>
    <property type="chains" value="A/B=1-715"/>
</dbReference>
<dbReference type="PDB" id="4RF8">
    <property type="method" value="X-ray"/>
    <property type="resolution" value="2.17 A"/>
    <property type="chains" value="A/B=1-715"/>
</dbReference>
<dbReference type="PDB" id="4RF9">
    <property type="method" value="X-ray"/>
    <property type="resolution" value="2.35 A"/>
    <property type="chains" value="A/B=1-715"/>
</dbReference>
<dbReference type="PDBsum" id="4RF6"/>
<dbReference type="PDBsum" id="4RF7"/>
<dbReference type="PDBsum" id="4RF8"/>
<dbReference type="PDBsum" id="4RF9"/>
<dbReference type="SMR" id="O15992"/>
<dbReference type="BRENDA" id="2.7.3.3">
    <property type="organism ID" value="370"/>
</dbReference>
<dbReference type="EvolutionaryTrace" id="O15992"/>
<dbReference type="GO" id="GO:0005615">
    <property type="term" value="C:extracellular space"/>
    <property type="evidence" value="ECO:0007669"/>
    <property type="project" value="TreeGrafter"/>
</dbReference>
<dbReference type="GO" id="GO:0004054">
    <property type="term" value="F:arginine kinase activity"/>
    <property type="evidence" value="ECO:0007669"/>
    <property type="project" value="UniProtKB-EC"/>
</dbReference>
<dbReference type="GO" id="GO:0005524">
    <property type="term" value="F:ATP binding"/>
    <property type="evidence" value="ECO:0007669"/>
    <property type="project" value="UniProtKB-KW"/>
</dbReference>
<dbReference type="GO" id="GO:0004111">
    <property type="term" value="F:creatine kinase activity"/>
    <property type="evidence" value="ECO:0007669"/>
    <property type="project" value="InterPro"/>
</dbReference>
<dbReference type="GO" id="GO:0046314">
    <property type="term" value="P:phosphocreatine biosynthetic process"/>
    <property type="evidence" value="ECO:0007669"/>
    <property type="project" value="InterPro"/>
</dbReference>
<dbReference type="CDD" id="cd07931">
    <property type="entry name" value="eukaryotic_phosphagen_kinases"/>
    <property type="match status" value="2"/>
</dbReference>
<dbReference type="FunFam" id="3.30.590.10:FF:000006">
    <property type="entry name" value="Arginine kinase 1"/>
    <property type="match status" value="2"/>
</dbReference>
<dbReference type="FunFam" id="1.10.135.10:FF:000003">
    <property type="entry name" value="Three-domain arginine kinase"/>
    <property type="match status" value="2"/>
</dbReference>
<dbReference type="Gene3D" id="1.10.135.10">
    <property type="entry name" value="ATP:guanido phosphotransferase, N-terminal domain"/>
    <property type="match status" value="2"/>
</dbReference>
<dbReference type="Gene3D" id="3.30.590.10">
    <property type="entry name" value="Glutamine synthetase/guanido kinase, catalytic domain"/>
    <property type="match status" value="2"/>
</dbReference>
<dbReference type="InterPro" id="IPR000749">
    <property type="entry name" value="ATP-guanido_PTrfase"/>
</dbReference>
<dbReference type="InterPro" id="IPR022415">
    <property type="entry name" value="ATP-guanido_PTrfase_AS"/>
</dbReference>
<dbReference type="InterPro" id="IPR022414">
    <property type="entry name" value="ATP-guanido_PTrfase_cat"/>
</dbReference>
<dbReference type="InterPro" id="IPR022413">
    <property type="entry name" value="ATP-guanido_PTrfase_N"/>
</dbReference>
<dbReference type="InterPro" id="IPR036802">
    <property type="entry name" value="ATP-guanido_PTrfase_N_sf"/>
</dbReference>
<dbReference type="InterPro" id="IPR014746">
    <property type="entry name" value="Gln_synth/guanido_kin_cat_dom"/>
</dbReference>
<dbReference type="PANTHER" id="PTHR11547:SF38">
    <property type="entry name" value="ARGININE KINASE 1-RELATED"/>
    <property type="match status" value="1"/>
</dbReference>
<dbReference type="PANTHER" id="PTHR11547">
    <property type="entry name" value="ARGININE OR CREATINE KINASE"/>
    <property type="match status" value="1"/>
</dbReference>
<dbReference type="Pfam" id="PF00217">
    <property type="entry name" value="ATP-gua_Ptrans"/>
    <property type="match status" value="2"/>
</dbReference>
<dbReference type="Pfam" id="PF02807">
    <property type="entry name" value="ATP-gua_PtransN"/>
    <property type="match status" value="2"/>
</dbReference>
<dbReference type="SUPFAM" id="SSF55931">
    <property type="entry name" value="Glutamine synthetase/guanido kinase"/>
    <property type="match status" value="2"/>
</dbReference>
<dbReference type="SUPFAM" id="SSF48034">
    <property type="entry name" value="Guanido kinase N-terminal domain"/>
    <property type="match status" value="2"/>
</dbReference>
<dbReference type="PROSITE" id="PS00112">
    <property type="entry name" value="PHOSPHAGEN_KINASE"/>
    <property type="match status" value="2"/>
</dbReference>
<dbReference type="PROSITE" id="PS51510">
    <property type="entry name" value="PHOSPHAGEN_KINASE_C"/>
    <property type="match status" value="2"/>
</dbReference>
<dbReference type="PROSITE" id="PS51509">
    <property type="entry name" value="PHOSPHAGEN_KINASE_N"/>
    <property type="match status" value="2"/>
</dbReference>
<protein>
    <recommendedName>
        <fullName>Arginine kinase</fullName>
        <shortName>AK</shortName>
        <ecNumber>2.7.3.3</ecNumber>
    </recommendedName>
</protein>
<comment type="catalytic activity">
    <reaction>
        <text>L-arginine + ATP = N(omega)-phospho-L-arginine + ADP + H(+)</text>
        <dbReference type="Rhea" id="RHEA:22940"/>
        <dbReference type="ChEBI" id="CHEBI:15378"/>
        <dbReference type="ChEBI" id="CHEBI:30616"/>
        <dbReference type="ChEBI" id="CHEBI:32682"/>
        <dbReference type="ChEBI" id="CHEBI:58477"/>
        <dbReference type="ChEBI" id="CHEBI:456216"/>
        <dbReference type="EC" id="2.7.3.3"/>
    </reaction>
</comment>
<comment type="subunit">
    <text>Monomer.</text>
</comment>
<comment type="similarity">
    <text evidence="2 3">Belongs to the ATP:guanido phosphotransferase family.</text>
</comment>
<sequence length="715" mass="80024">MADPETAAKFKSKNAFPDPLNDPKCNPKSLVKKYLTPKVFESLKNKKTKLGITLWDCINSGVVNLDSGVGVYAGDEESYTLFGPLFDAIIEDYHSPYKLATGHNSDMNPAHVKAPDLDPANRYIRSTRIRVARSLKGYGLAPGVTKAHRLEIEKKVVGVLTSLTGDLAGKYYPLSGMDEKTRQQLVDDHFLFKKGDRFLEAAGINKEWPEGRGIYHNNDKTFLVWLNEEDHLRIISMEKGSDIGSVFSRLCRAVNEIDKKLGFQHTKKHGYLTSCPSNLGTGMRASVHVKIPHAKEHPDFENILTKYHIQARGIHGEHSESTGEDAGVYDISNRRRLGLSEVQCVQDMYDGVKALMELEKEAIAKKRSVFPEVLKNPEVKSLLRKYLTPELFDSLKDKKTAKGISLYDCINSGVENLDSSCGVYAGDEECYTLFAPLFDKIVEDYHSPYKLANKHTSDMNPEKVDAPNLDPEGTYIRSTRIRVARNVKGYALTPGLTRNERLDIERKVVGVLSSLTGDLAGQYYPLTGMDEATRQKLVNDHFLFKKGDRFLEAAGVNKLWPEGRGIFHNNDKTFLVWINEEDQLRIISMEKGSDIGSVFGRLCRAVNEIDKQLGFQHTDAHGYLSGCPTNLGTGMRASVHVKIPKASAHPDFQKICDEFHIQARGIHGEHSVSTGEDAGVFDISNRRRLGLSEVQCVQDMYNGVKKLLEIEKSTK</sequence>
<reference key="1">
    <citation type="journal article" date="1997" name="Biochem. J.">
        <title>Evolution of phosphagen kinase. Isolation, characterization and cDNA-derived amino acid sequence of two-domain arginine kinase from the sea anemone Anthopleura japonicus.</title>
        <authorList>
            <person name="Suzuki T."/>
            <person name="Kawasaki Y."/>
            <person name="Furukohri T."/>
        </authorList>
    </citation>
    <scope>NUCLEOTIDE SEQUENCE [MRNA]</scope>
    <scope>PARTIAL PROTEIN SEQUENCE</scope>
</reference>
<organism>
    <name type="scientific">Anthopleura japonica</name>
    <name type="common">Sea anemone</name>
    <dbReference type="NCBI Taxonomy" id="67755"/>
    <lineage>
        <taxon>Eukaryota</taxon>
        <taxon>Metazoa</taxon>
        <taxon>Cnidaria</taxon>
        <taxon>Anthozoa</taxon>
        <taxon>Hexacorallia</taxon>
        <taxon>Actiniaria</taxon>
        <taxon>Actiniidae</taxon>
        <taxon>Anthopleura</taxon>
    </lineage>
</organism>
<evidence type="ECO:0000250" key="1"/>
<evidence type="ECO:0000255" key="2">
    <source>
        <dbReference type="PROSITE-ProRule" id="PRU00842"/>
    </source>
</evidence>
<evidence type="ECO:0000255" key="3">
    <source>
        <dbReference type="PROSITE-ProRule" id="PRU00843"/>
    </source>
</evidence>
<evidence type="ECO:0007829" key="4">
    <source>
        <dbReference type="PDB" id="4RF6"/>
    </source>
</evidence>
<accession>O15992</accession>
<proteinExistence type="evidence at protein level"/>
<keyword id="KW-0002">3D-structure</keyword>
<keyword id="KW-0067">ATP-binding</keyword>
<keyword id="KW-0903">Direct protein sequencing</keyword>
<keyword id="KW-0418">Kinase</keyword>
<keyword id="KW-0547">Nucleotide-binding</keyword>
<keyword id="KW-0677">Repeat</keyword>
<keyword id="KW-0808">Transferase</keyword>
<name>KARG_ANTJA</name>